<keyword id="KW-0012">Acyltransferase</keyword>
<keyword id="KW-0489">Methyltransferase</keyword>
<keyword id="KW-0511">Multifunctional enzyme</keyword>
<keyword id="KW-0521">NADP</keyword>
<keyword id="KW-0560">Oxidoreductase</keyword>
<keyword id="KW-0596">Phosphopantetheine</keyword>
<keyword id="KW-0597">Phosphoprotein</keyword>
<keyword id="KW-0808">Transferase</keyword>
<name>LCSB_PURLI</name>
<organism>
    <name type="scientific">Purpureocillium lilacinum</name>
    <name type="common">Paecilomyces lilacinus</name>
    <dbReference type="NCBI Taxonomy" id="33203"/>
    <lineage>
        <taxon>Eukaryota</taxon>
        <taxon>Fungi</taxon>
        <taxon>Dikarya</taxon>
        <taxon>Ascomycota</taxon>
        <taxon>Pezizomycotina</taxon>
        <taxon>Sordariomycetes</taxon>
        <taxon>Hypocreomycetidae</taxon>
        <taxon>Hypocreales</taxon>
        <taxon>Ophiocordycipitaceae</taxon>
        <taxon>Purpureocillium</taxon>
    </lineage>
</organism>
<comment type="function">
    <text evidence="6 8">Highly reducing polyketide synthase; part of the gene cluster that mediates the biosynthesis of the lipopeptide antibiotics leucinostatins that show extensive biological activities, including antimalarial, antiviral, antibacterial, antifungal, and antitumor activities, as well as phytotoxic (PubMed:27416025). Leucinostatin A contains nine amino acid residues, including the unusual amino acid 4-methyl-L-proline (MePro), 2-amino-6-hydroxy-4-methyl-8-oxodecanoic acid (AHyMeOA), 3-hydroxyleucine (HyLeu), alpha-aminoisobutyric acid (AIB), beta-Ala, a 4-methylhex-2-enoic acid at the N-terminus as well as a N1,N1-dimethylpropane-1,2-diamine (DPD) at the C-terminus (Probable). The biosynthesis of leucinostatins is probably initiated with the assembly of 4-methylhex-2-enoic acid by a reducing PKS. Two reducing polyketide synthases, lcsB and lcsC, have been identified in the cluster and it is not clear which is the one that assembles 4-methylhex-2-enoic acid since both contain KS, AT, DH, cMT, ER, KR and ACP domains (Probable). The polyketide residue might be transferred to the NRPS lcsA, mediated by two additional enzymes, the acyl-CoA ligase lcsD and the thioesterase lcsE. The linear polyketide carboxylic acid, which is released from PKS, is converted to a CoA thioester by lcsD, and then lcsE hydrolyzes the thiol bond and shuttles the polyketide intermediate to lcsA (Probable). The C domain of the first module catalyzed the condensation of 4-methylhex-2-enoic acid and MePro carried by domain A1, followed by successive condensations of nine amino acids to trigger the elongation of the linear peptide. A5 and A6 domains of lcsA are proposed to incorporate leucine, A2 AHyMeOA, and A3 incorporates HyLeu. A4, A7 and A8 incorporate AIB (Probable). The AHyMeOA in leucinostatin A activated by the A2 might be produced by the second PKS (lcsB or lcsC) present within the cluster (Probable). The MePro is probably produced via leucine cyclization and may originate from a separate pathway, independent of the cluster. Another nonproteinogenic amino acid, beta-Ala, could be produced by an aspartic acid decarboxylase also localized outside of the cluster. Two candidates are VFPBJ_01400 and VFPBJ_10476 (Probable). The final peptide scaffold may be released by the NAD(P)H-dependent thioester reductase (TE) at the C-terminal region of lcsA (Probable). Transamination of the lcsA product by the transaminase lcsP may produce DPD at the C-terminus (Probable). Further hydroxylation steps performed alternatively by the cytochrome P450 monooxygenases lcsI, lcsK andr lcsN then yield the non-methylated leucinostatins precursor. It is also possible that leucines can be hydroxylated prior to their incorporation into the peptide (Probable). Varying extents of methylation then lead to the formation of leucinostatins A and B (Probable).</text>
</comment>
<comment type="pathway">
    <text evidence="8">Secondary metabolite biosynthesis.</text>
</comment>
<comment type="induction">
    <text evidence="6">Expression is positively regulated by the leucinostatins biosynthesis cluster-specific transcription regulator lcsF.</text>
</comment>
<comment type="domain">
    <text evidence="8">Multidomain protein; including a ketosynthase (KS) that catalyzes repeated decarboxylative condensation to elongate the polyketide backbone; a malonyl-CoA:ACP transacylase (MAT) that selects and transfers the extender unit malonyl-CoA; a dehydratase (DH) domain that reduces hydroxyl groups to enoyl groups; a methyltransferase (CMeT) domain responsible for the incorporation of methyl groups; an enoylreductase (ER) domain that reduces enoyl groups to alkyl group; a ketoreductase (KR) domain that catalyzes beta-ketoreduction steps; and an acyl-carrier protein (ACP) that serves as the tether of the growing and completed polyketide via its phosphopantetheinyl arm.</text>
</comment>
<protein>
    <recommendedName>
        <fullName evidence="7">Highly reducing polyketide synthase lcsB</fullName>
        <shortName evidence="8">HR-PKS lcsB</shortName>
        <ecNumber evidence="8">2.3.1.-</ecNumber>
    </recommendedName>
    <alternativeName>
        <fullName evidence="7">Leucinostatins biosynthesis cluster protein B</fullName>
    </alternativeName>
</protein>
<evidence type="ECO:0000255" key="1"/>
<evidence type="ECO:0000255" key="2">
    <source>
        <dbReference type="PROSITE-ProRule" id="PRU00258"/>
    </source>
</evidence>
<evidence type="ECO:0000255" key="3">
    <source>
        <dbReference type="PROSITE-ProRule" id="PRU01348"/>
    </source>
</evidence>
<evidence type="ECO:0000255" key="4">
    <source>
        <dbReference type="PROSITE-ProRule" id="PRU01363"/>
    </source>
</evidence>
<evidence type="ECO:0000256" key="5">
    <source>
        <dbReference type="SAM" id="MobiDB-lite"/>
    </source>
</evidence>
<evidence type="ECO:0000269" key="6">
    <source>
    </source>
</evidence>
<evidence type="ECO:0000303" key="7">
    <source>
    </source>
</evidence>
<evidence type="ECO:0000305" key="8">
    <source>
    </source>
</evidence>
<sequence>MAEPIAVVGMAMRLPGNVRNGEEFWQLLVEKRNGLCDVPQDRYNVNGFHDPSGKPSTFRMNKGYFLQDVDIAQFDTSFFSLSKAELERLDPQQRQLLEVAYECMEDAGATSWRGSNTGCYVGVFGDDWQDLNAKETLHKGGYRVTGYDDFVLGNRISYEFDLHGPSMTVKTGWLIFSPTMTLALSDQGVLSPSGICKTFDATADGYGRGEAVNAIYIKRLSQAIEDGDSIRAIIRGTSVNCDGRTQAMLTPSPTAQEALIRRAYEQAGIQDMSRTAMVECHGTGTSVGDPLEATAVANCFGDKGIYITSVKPNVGHSEGAAGLTSLIKAILAIEHRQIPPNIFFESPNPAIPFSKCKLRVPVKTEEWPDARAERVSVNSFGIGGVNAHVIVESLREYQNHDRGLSNGSTTSSSPAGDMTPTDSDGFEDVGSSESSTVDEFANSDGVHSNGHQDVDGSAESKASDAKLESNDTPQSRSTPSNGDQTSHTVGRRNGYSGDDVEFPERPHLLLFSATSEPALKDTVKTYQEFLPTSHISLKDVAYTLALRRDHKPHRAFAIAGNKSSIELSQLETVKTPARIAWVFTGQGAQWPEMGAELIDTNPVFQATIRGLDAFLAGLPSPPPWTIESELRKTAGDSRVQKAEFGHPLSIAVQIGLIDVLKSWGIKPDLVLGHSSGEMAAAYASGSITAKAAMAAATFRGTTSTSGTAEKRGSMAAIGLGAHEMAPYMEPGVVVACENSQCSVTISGDSEQVEKVVQNVKTQREGVLARFLRVEKAFHSHHMLEYGPLYEEHLQPFVSSTSPLIPFYSSVTGKRLSGDGCLGPAYWRRNMESPVLFNTALRSAMTAYEGRLVLIEIGPHPALKGPIGQILRDMGRSADVHVGTLQRDKGCDESLLQLAGKLFQQDVNVDFSHVLLPSGRHVANLPRYPWKRDNSHWAESRMTREWRFREHAPHELLGSRVTEISNEPCWRTKLALEDVSWLSGHEVGGQVVFPGAGYISMVGEAIRQLHEELAYSLKNVSIKAGLVLEHGKTVEIVTSLSPVATDSSDEASWYTFSISSYDGTKWVKHCVGEARASVDKAAQLSVQSPKGYARTVDANEWYNILNRVGFNYTGLFRGLGSITAAPGDNRAAASVPSLSQAGKFAMHPAVMDQCFQLFTVSAYGGLGRNCKNIAVPTFIEEIIVRPTAHDLRVGATIHTLERGSFVGDLVAEQAGELQLSLKGFKASALTRSDDEDESLPLITRFEWRPHAHFVSLADYLHPRTHIPREWPLFEEMMLLCAIDHLETIKLTGETQPHLRKFFSWMQGQVDKYRSGRNLFVANDRGLLELTKAQRLGRIAEIAADGEKSQYPAFCIAIHRLFQTAESIFSGETHPLHVLMKDDVLTEFYAVGDELNYATALRVLGHTNPRLRILEVGAGTGGTTVKVLKALTSSTGERLYSTYTYTDISAGFMASAKERFSEVEGLQYATLDISQDPSEQGYLEGSYDLIIGSNVIHATPNLNVSLSHLRRLLSPGGKLFLQELCPDAKYVNYVMGFLPGWWLGDGDNRPDEPYISADRWAKEMVAAGFAEPEAMVIDGITPYQQSAGIIASPACETSKPLAVSLLSHSMDGAYVAEAKRVLEDLGVAVDVVTFGQPLPSHDVVSLLDLQASTVHDLTEPSFKTLVAQLQALDLDAKVIWATRSAQVACTDPRTAMSLGLTRTARSELSVKLFTVEIDDKTNHLAASKCLVDILMRRHSPQLDAESMDPDWEYAVVDGQILVPRMHWQTMAAAFERTNGDDSRPTEKHLSVKTPGLLHTMGWSQSERAPLEHGQVTVQTRAIGLNFRDVLIALGVLDNSTREIGLEGSGVVTEVGPGVEKLQVGDRVMYMSSGCFTTHITLSQTLCVKLDDGLTFEQGAALPCVYATAAMALVDKANLQPGQTILIHSACGGVGLAAIQIAQMLGGEVYCTVGNEDKVRYLMDNHNIPRHRIFNSRDTSFLRDVMAVTDNRGVDVVLNSLSGELLHASWRCVAEFGTMIEIGKRDFRRRAKLSMEAFEANRTFVGLDLWQVSQVRPEQVARLLERCIKWMQAGSIKPGVIARVWDAEQVQDAFRFMQGGRHIGKIIVKMPQDSSSLESTKERPSPSLRHDRSYLLVGGLGGLGRAIATWMAENGARHLIFLSRSARQGPQLASFVEELAAQGCEVQLVAGSVSCPDDVKRAVDGASKPIAGVMNLSMVLRDISLSDMTFADWTTAVAPKVQGTWNLHEAITSELDFFILCSSYSGIVGQWGQANYAAANTFLDAFVQYRHHKGLAASVIDIGVMGEVGFVSKNKDILGLFQKSGMRILKEQDLLDATNLAIQRSKPSRAQVSDGCFDSPGQILLGLVTSVPIASPNNRVVWKNDIRMSIYHNINGGKDSASSATAELDDITTLLKSAASDPSVLQDEESTVIIATAIASALANFLIKEEGSIKVEDSPEHAGLDSLVAMELRNWIRQRFGVDTTVMTIVQSTSIMSLGDYIRTALVKRS</sequence>
<reference key="1">
    <citation type="journal article" date="2016" name="PLoS Pathog.">
        <title>Biosynthesis of antibiotic leucinostatins in bio-control fungus Purpureocillium lilacinum and their inhibition on phytophthora revealed by genome mining.</title>
        <authorList>
            <person name="Wang G."/>
            <person name="Liu Z."/>
            <person name="Lin R."/>
            <person name="Li E."/>
            <person name="Mao Z."/>
            <person name="Ling J."/>
            <person name="Yang Y."/>
            <person name="Yin W.B."/>
            <person name="Xie B."/>
        </authorList>
    </citation>
    <scope>NUCLEOTIDE SEQUENCE [LARGE SCALE GENOMIC DNA]</scope>
    <scope>IDENTIFICATION</scope>
    <scope>FUNCTION</scope>
    <scope>DOMAIN</scope>
    <scope>INDUCTION</scope>
    <scope>PATHWAY</scope>
    <source>
        <strain>PLBJ-1</strain>
    </source>
</reference>
<dbReference type="EC" id="2.3.1.-" evidence="8"/>
<dbReference type="EMBL" id="LSBH01000002">
    <property type="protein sequence ID" value="OAQ83760.1"/>
    <property type="molecule type" value="Genomic_DNA"/>
</dbReference>
<dbReference type="SMR" id="A0A179H2I8"/>
<dbReference type="Proteomes" id="UP000078240">
    <property type="component" value="Unassembled WGS sequence"/>
</dbReference>
<dbReference type="GO" id="GO:0004312">
    <property type="term" value="F:fatty acid synthase activity"/>
    <property type="evidence" value="ECO:0007669"/>
    <property type="project" value="TreeGrafter"/>
</dbReference>
<dbReference type="GO" id="GO:0008168">
    <property type="term" value="F:methyltransferase activity"/>
    <property type="evidence" value="ECO:0007669"/>
    <property type="project" value="UniProtKB-KW"/>
</dbReference>
<dbReference type="GO" id="GO:0016491">
    <property type="term" value="F:oxidoreductase activity"/>
    <property type="evidence" value="ECO:0007669"/>
    <property type="project" value="UniProtKB-KW"/>
</dbReference>
<dbReference type="GO" id="GO:0031177">
    <property type="term" value="F:phosphopantetheine binding"/>
    <property type="evidence" value="ECO:0007669"/>
    <property type="project" value="InterPro"/>
</dbReference>
<dbReference type="GO" id="GO:0006633">
    <property type="term" value="P:fatty acid biosynthetic process"/>
    <property type="evidence" value="ECO:0007669"/>
    <property type="project" value="TreeGrafter"/>
</dbReference>
<dbReference type="GO" id="GO:0032259">
    <property type="term" value="P:methylation"/>
    <property type="evidence" value="ECO:0007669"/>
    <property type="project" value="UniProtKB-KW"/>
</dbReference>
<dbReference type="GO" id="GO:0044550">
    <property type="term" value="P:secondary metabolite biosynthetic process"/>
    <property type="evidence" value="ECO:0007669"/>
    <property type="project" value="TreeGrafter"/>
</dbReference>
<dbReference type="CDD" id="cd02440">
    <property type="entry name" value="AdoMet_MTases"/>
    <property type="match status" value="1"/>
</dbReference>
<dbReference type="CDD" id="cd05195">
    <property type="entry name" value="enoyl_red"/>
    <property type="match status" value="1"/>
</dbReference>
<dbReference type="CDD" id="cd00833">
    <property type="entry name" value="PKS"/>
    <property type="match status" value="1"/>
</dbReference>
<dbReference type="FunFam" id="3.40.50.720:FF:000209">
    <property type="entry name" value="Polyketide synthase Pks12"/>
    <property type="match status" value="1"/>
</dbReference>
<dbReference type="Gene3D" id="3.30.70.3290">
    <property type="match status" value="1"/>
</dbReference>
<dbReference type="Gene3D" id="3.40.47.10">
    <property type="match status" value="2"/>
</dbReference>
<dbReference type="Gene3D" id="1.10.1200.10">
    <property type="entry name" value="ACP-like"/>
    <property type="match status" value="1"/>
</dbReference>
<dbReference type="Gene3D" id="3.40.366.10">
    <property type="entry name" value="Malonyl-Coenzyme A Acyl Carrier Protein, domain 2"/>
    <property type="match status" value="1"/>
</dbReference>
<dbReference type="Gene3D" id="3.90.180.10">
    <property type="entry name" value="Medium-chain alcohol dehydrogenases, catalytic domain"/>
    <property type="match status" value="1"/>
</dbReference>
<dbReference type="Gene3D" id="3.40.50.720">
    <property type="entry name" value="NAD(P)-binding Rossmann-like Domain"/>
    <property type="match status" value="2"/>
</dbReference>
<dbReference type="Gene3D" id="3.10.129.110">
    <property type="entry name" value="Polyketide synthase dehydratase"/>
    <property type="match status" value="1"/>
</dbReference>
<dbReference type="Gene3D" id="3.40.50.150">
    <property type="entry name" value="Vaccinia Virus protein VP39"/>
    <property type="match status" value="1"/>
</dbReference>
<dbReference type="InterPro" id="IPR001227">
    <property type="entry name" value="Ac_transferase_dom_sf"/>
</dbReference>
<dbReference type="InterPro" id="IPR036736">
    <property type="entry name" value="ACP-like_sf"/>
</dbReference>
<dbReference type="InterPro" id="IPR014043">
    <property type="entry name" value="Acyl_transferase_dom"/>
</dbReference>
<dbReference type="InterPro" id="IPR016035">
    <property type="entry name" value="Acyl_Trfase/lysoPLipase"/>
</dbReference>
<dbReference type="InterPro" id="IPR013154">
    <property type="entry name" value="ADH-like_N"/>
</dbReference>
<dbReference type="InterPro" id="IPR011032">
    <property type="entry name" value="GroES-like_sf"/>
</dbReference>
<dbReference type="InterPro" id="IPR014031">
    <property type="entry name" value="Ketoacyl_synth_C"/>
</dbReference>
<dbReference type="InterPro" id="IPR014030">
    <property type="entry name" value="Ketoacyl_synth_N"/>
</dbReference>
<dbReference type="InterPro" id="IPR016036">
    <property type="entry name" value="Malonyl_transacylase_ACP-bd"/>
</dbReference>
<dbReference type="InterPro" id="IPR013217">
    <property type="entry name" value="Methyltransf_12"/>
</dbReference>
<dbReference type="InterPro" id="IPR036291">
    <property type="entry name" value="NAD(P)-bd_dom_sf"/>
</dbReference>
<dbReference type="InterPro" id="IPR032821">
    <property type="entry name" value="PKS_assoc"/>
</dbReference>
<dbReference type="InterPro" id="IPR020841">
    <property type="entry name" value="PKS_Beta-ketoAc_synthase_dom"/>
</dbReference>
<dbReference type="InterPro" id="IPR042104">
    <property type="entry name" value="PKS_dehydratase_sf"/>
</dbReference>
<dbReference type="InterPro" id="IPR020807">
    <property type="entry name" value="PKS_DH"/>
</dbReference>
<dbReference type="InterPro" id="IPR049551">
    <property type="entry name" value="PKS_DH_C"/>
</dbReference>
<dbReference type="InterPro" id="IPR049552">
    <property type="entry name" value="PKS_DH_N"/>
</dbReference>
<dbReference type="InterPro" id="IPR020843">
    <property type="entry name" value="PKS_ER"/>
</dbReference>
<dbReference type="InterPro" id="IPR013968">
    <property type="entry name" value="PKS_KR"/>
</dbReference>
<dbReference type="InterPro" id="IPR049900">
    <property type="entry name" value="PKS_mFAS_DH"/>
</dbReference>
<dbReference type="InterPro" id="IPR050091">
    <property type="entry name" value="PKS_NRPS_Biosynth_Enz"/>
</dbReference>
<dbReference type="InterPro" id="IPR020806">
    <property type="entry name" value="PKS_PP-bd"/>
</dbReference>
<dbReference type="InterPro" id="IPR009081">
    <property type="entry name" value="PP-bd_ACP"/>
</dbReference>
<dbReference type="InterPro" id="IPR006162">
    <property type="entry name" value="Ppantetheine_attach_site"/>
</dbReference>
<dbReference type="InterPro" id="IPR029063">
    <property type="entry name" value="SAM-dependent_MTases_sf"/>
</dbReference>
<dbReference type="InterPro" id="IPR016039">
    <property type="entry name" value="Thiolase-like"/>
</dbReference>
<dbReference type="PANTHER" id="PTHR43775">
    <property type="entry name" value="FATTY ACID SYNTHASE"/>
    <property type="match status" value="1"/>
</dbReference>
<dbReference type="PANTHER" id="PTHR43775:SF49">
    <property type="entry name" value="SYNTHASE, PUTATIVE (JCVI)-RELATED"/>
    <property type="match status" value="1"/>
</dbReference>
<dbReference type="Pfam" id="PF00698">
    <property type="entry name" value="Acyl_transf_1"/>
    <property type="match status" value="1"/>
</dbReference>
<dbReference type="Pfam" id="PF08240">
    <property type="entry name" value="ADH_N"/>
    <property type="match status" value="1"/>
</dbReference>
<dbReference type="Pfam" id="PF13602">
    <property type="entry name" value="ADH_zinc_N_2"/>
    <property type="match status" value="1"/>
</dbReference>
<dbReference type="Pfam" id="PF22621">
    <property type="entry name" value="CurL-like_PKS_C"/>
    <property type="match status" value="1"/>
</dbReference>
<dbReference type="Pfam" id="PF16197">
    <property type="entry name" value="KAsynt_C_assoc"/>
    <property type="match status" value="1"/>
</dbReference>
<dbReference type="Pfam" id="PF00109">
    <property type="entry name" value="ketoacyl-synt"/>
    <property type="match status" value="2"/>
</dbReference>
<dbReference type="Pfam" id="PF02801">
    <property type="entry name" value="Ketoacyl-synt_C"/>
    <property type="match status" value="1"/>
</dbReference>
<dbReference type="Pfam" id="PF08659">
    <property type="entry name" value="KR"/>
    <property type="match status" value="1"/>
</dbReference>
<dbReference type="Pfam" id="PF08242">
    <property type="entry name" value="Methyltransf_12"/>
    <property type="match status" value="1"/>
</dbReference>
<dbReference type="Pfam" id="PF21089">
    <property type="entry name" value="PKS_DH_N"/>
    <property type="match status" value="1"/>
</dbReference>
<dbReference type="Pfam" id="PF00550">
    <property type="entry name" value="PP-binding"/>
    <property type="match status" value="1"/>
</dbReference>
<dbReference type="Pfam" id="PF14765">
    <property type="entry name" value="PS-DH"/>
    <property type="match status" value="1"/>
</dbReference>
<dbReference type="SMART" id="SM00827">
    <property type="entry name" value="PKS_AT"/>
    <property type="match status" value="1"/>
</dbReference>
<dbReference type="SMART" id="SM00826">
    <property type="entry name" value="PKS_DH"/>
    <property type="match status" value="1"/>
</dbReference>
<dbReference type="SMART" id="SM00829">
    <property type="entry name" value="PKS_ER"/>
    <property type="match status" value="1"/>
</dbReference>
<dbReference type="SMART" id="SM00822">
    <property type="entry name" value="PKS_KR"/>
    <property type="match status" value="1"/>
</dbReference>
<dbReference type="SMART" id="SM00825">
    <property type="entry name" value="PKS_KS"/>
    <property type="match status" value="1"/>
</dbReference>
<dbReference type="SMART" id="SM00823">
    <property type="entry name" value="PKS_PP"/>
    <property type="match status" value="1"/>
</dbReference>
<dbReference type="SUPFAM" id="SSF47336">
    <property type="entry name" value="ACP-like"/>
    <property type="match status" value="1"/>
</dbReference>
<dbReference type="SUPFAM" id="SSF52151">
    <property type="entry name" value="FabD/lysophospholipase-like"/>
    <property type="match status" value="1"/>
</dbReference>
<dbReference type="SUPFAM" id="SSF50129">
    <property type="entry name" value="GroES-like"/>
    <property type="match status" value="1"/>
</dbReference>
<dbReference type="SUPFAM" id="SSF51735">
    <property type="entry name" value="NAD(P)-binding Rossmann-fold domains"/>
    <property type="match status" value="2"/>
</dbReference>
<dbReference type="SUPFAM" id="SSF55048">
    <property type="entry name" value="Probable ACP-binding domain of malonyl-CoA ACP transacylase"/>
    <property type="match status" value="1"/>
</dbReference>
<dbReference type="SUPFAM" id="SSF53335">
    <property type="entry name" value="S-adenosyl-L-methionine-dependent methyltransferases"/>
    <property type="match status" value="1"/>
</dbReference>
<dbReference type="SUPFAM" id="SSF53901">
    <property type="entry name" value="Thiolase-like"/>
    <property type="match status" value="1"/>
</dbReference>
<dbReference type="PROSITE" id="PS50075">
    <property type="entry name" value="CARRIER"/>
    <property type="match status" value="1"/>
</dbReference>
<dbReference type="PROSITE" id="PS52004">
    <property type="entry name" value="KS3_2"/>
    <property type="match status" value="1"/>
</dbReference>
<dbReference type="PROSITE" id="PS00012">
    <property type="entry name" value="PHOSPHOPANTETHEINE"/>
    <property type="match status" value="1"/>
</dbReference>
<dbReference type="PROSITE" id="PS52019">
    <property type="entry name" value="PKS_MFAS_DH"/>
    <property type="match status" value="1"/>
</dbReference>
<accession>A0A179H2I8</accession>
<proteinExistence type="evidence at transcript level"/>
<gene>
    <name evidence="7" type="primary">lcsB</name>
    <name type="ORF">VFPBJ_02527</name>
</gene>
<feature type="chain" id="PRO_0000446600" description="Highly reducing polyketide synthase lcsB">
    <location>
        <begin position="1"/>
        <end position="2507"/>
    </location>
</feature>
<feature type="domain" description="Ketosynthase family 3 (KS3)" evidence="3 8">
    <location>
        <begin position="2"/>
        <end position="393"/>
    </location>
</feature>
<feature type="domain" description="PKS/mFAS DH" evidence="4">
    <location>
        <begin position="953"/>
        <end position="1234"/>
    </location>
</feature>
<feature type="domain" description="Carrier" evidence="2 8">
    <location>
        <begin position="2425"/>
        <end position="2503"/>
    </location>
</feature>
<feature type="region of interest" description="Disordered" evidence="5">
    <location>
        <begin position="399"/>
        <end position="501"/>
    </location>
</feature>
<feature type="region of interest" description="Malonyl-CoA:ACP transacylase (MAT) domain" evidence="1 8">
    <location>
        <begin position="581"/>
        <end position="900"/>
    </location>
</feature>
<feature type="region of interest" description="Dehydratase (DH) domain" evidence="1 8">
    <location>
        <begin position="953"/>
        <end position="1232"/>
    </location>
</feature>
<feature type="region of interest" description="N-terminal hotdog fold" evidence="4">
    <location>
        <begin position="953"/>
        <end position="1080"/>
    </location>
</feature>
<feature type="region of interest" description="C-terminal hotdog fold" evidence="4">
    <location>
        <begin position="1092"/>
        <end position="1234"/>
    </location>
</feature>
<feature type="region of interest" description="Methyltransferase (CMet) domain" evidence="1 8">
    <location>
        <begin position="1402"/>
        <end position="1570"/>
    </location>
</feature>
<feature type="region of interest" description="Enoyl reductase (ER) (ER) domain" evidence="1 8">
    <location>
        <begin position="1793"/>
        <end position="2105"/>
    </location>
</feature>
<feature type="region of interest" description="Ketoreductase (KR) domain" evidence="1 8">
    <location>
        <begin position="2130"/>
        <end position="2303"/>
    </location>
</feature>
<feature type="compositionally biased region" description="Polar residues" evidence="5">
    <location>
        <begin position="405"/>
        <end position="414"/>
    </location>
</feature>
<feature type="compositionally biased region" description="Polar residues" evidence="5">
    <location>
        <begin position="470"/>
        <end position="488"/>
    </location>
</feature>
<feature type="active site" description="Proton acceptor; for dehydratase activity" evidence="4">
    <location>
        <position position="984"/>
    </location>
</feature>
<feature type="active site" description="Proton donor; for dehydratase activity" evidence="4">
    <location>
        <position position="1151"/>
    </location>
</feature>
<feature type="modified residue" description="O-(pantetheine 4'-phosphoryl)serine" evidence="2">
    <location>
        <position position="2463"/>
    </location>
</feature>